<protein>
    <recommendedName>
        <fullName>Membrane progestin receptor gamma-A</fullName>
        <shortName>mPR gamma-A</shortName>
    </recommendedName>
    <alternativeName>
        <fullName>Progestin and adipoQ receptor family member V-A</fullName>
    </alternativeName>
</protein>
<proteinExistence type="evidence at transcript level"/>
<accession>Q7ZVH1</accession>
<accession>Q1LUF6</accession>
<dbReference type="EMBL" id="BX942814">
    <property type="protein sequence ID" value="CAK11061.1"/>
    <property type="molecule type" value="Genomic_DNA"/>
</dbReference>
<dbReference type="EMBL" id="BC045864">
    <property type="protein sequence ID" value="AAH45864.1"/>
    <property type="molecule type" value="mRNA"/>
</dbReference>
<dbReference type="RefSeq" id="NP_956481.1">
    <property type="nucleotide sequence ID" value="NM_200187.1"/>
</dbReference>
<dbReference type="SMR" id="Q7ZVH1"/>
<dbReference type="FunCoup" id="Q7ZVH1">
    <property type="interactions" value="144"/>
</dbReference>
<dbReference type="STRING" id="7955.ENSDARP00000060310"/>
<dbReference type="PaxDb" id="7955-ENSDARP00000060310"/>
<dbReference type="Ensembl" id="ENSDART00000060311">
    <property type="protein sequence ID" value="ENSDARP00000060310"/>
    <property type="gene ID" value="ENSDARG00000041145"/>
</dbReference>
<dbReference type="GeneID" id="393156"/>
<dbReference type="KEGG" id="dre:393156"/>
<dbReference type="AGR" id="ZFIN:ZDB-GENE-040426-867"/>
<dbReference type="CTD" id="393156"/>
<dbReference type="ZFIN" id="ZDB-GENE-040426-867">
    <property type="gene designation" value="paqr5a"/>
</dbReference>
<dbReference type="eggNOG" id="KOG0748">
    <property type="taxonomic scope" value="Eukaryota"/>
</dbReference>
<dbReference type="HOGENOM" id="CLU_052356_1_0_1"/>
<dbReference type="InParanoid" id="Q7ZVH1"/>
<dbReference type="OMA" id="AVHYQHT"/>
<dbReference type="OrthoDB" id="529367at2759"/>
<dbReference type="PhylomeDB" id="Q7ZVH1"/>
<dbReference type="TreeFam" id="TF319738"/>
<dbReference type="PRO" id="PR:Q7ZVH1"/>
<dbReference type="Proteomes" id="UP000000437">
    <property type="component" value="Alternate scaffold 18"/>
</dbReference>
<dbReference type="Proteomes" id="UP000000437">
    <property type="component" value="Chromosome 18"/>
</dbReference>
<dbReference type="Bgee" id="ENSDARG00000041145">
    <property type="expression patterns" value="Expressed in early embryo and 14 other cell types or tissues"/>
</dbReference>
<dbReference type="GO" id="GO:0016020">
    <property type="term" value="C:membrane"/>
    <property type="evidence" value="ECO:0007669"/>
    <property type="project" value="UniProtKB-SubCell"/>
</dbReference>
<dbReference type="GO" id="GO:0038023">
    <property type="term" value="F:signaling receptor activity"/>
    <property type="evidence" value="ECO:0000318"/>
    <property type="project" value="GO_Central"/>
</dbReference>
<dbReference type="GO" id="GO:0005496">
    <property type="term" value="F:steroid binding"/>
    <property type="evidence" value="ECO:0007669"/>
    <property type="project" value="UniProtKB-KW"/>
</dbReference>
<dbReference type="GO" id="GO:0048477">
    <property type="term" value="P:oogenesis"/>
    <property type="evidence" value="ECO:0007669"/>
    <property type="project" value="UniProtKB-KW"/>
</dbReference>
<dbReference type="InterPro" id="IPR004254">
    <property type="entry name" value="AdipoR/HlyIII-related"/>
</dbReference>
<dbReference type="PANTHER" id="PTHR20855">
    <property type="entry name" value="ADIPOR/PROGESTIN RECEPTOR-RELATED"/>
    <property type="match status" value="1"/>
</dbReference>
<dbReference type="PANTHER" id="PTHR20855:SF38">
    <property type="entry name" value="MEMBRANE PROGESTIN RECEPTOR GAMMA"/>
    <property type="match status" value="1"/>
</dbReference>
<dbReference type="Pfam" id="PF03006">
    <property type="entry name" value="HlyIII"/>
    <property type="match status" value="1"/>
</dbReference>
<reference key="1">
    <citation type="journal article" date="2013" name="Nature">
        <title>The zebrafish reference genome sequence and its relationship to the human genome.</title>
        <authorList>
            <person name="Howe K."/>
            <person name="Clark M.D."/>
            <person name="Torroja C.F."/>
            <person name="Torrance J."/>
            <person name="Berthelot C."/>
            <person name="Muffato M."/>
            <person name="Collins J.E."/>
            <person name="Humphray S."/>
            <person name="McLaren K."/>
            <person name="Matthews L."/>
            <person name="McLaren S."/>
            <person name="Sealy I."/>
            <person name="Caccamo M."/>
            <person name="Churcher C."/>
            <person name="Scott C."/>
            <person name="Barrett J.C."/>
            <person name="Koch R."/>
            <person name="Rauch G.J."/>
            <person name="White S."/>
            <person name="Chow W."/>
            <person name="Kilian B."/>
            <person name="Quintais L.T."/>
            <person name="Guerra-Assuncao J.A."/>
            <person name="Zhou Y."/>
            <person name="Gu Y."/>
            <person name="Yen J."/>
            <person name="Vogel J.H."/>
            <person name="Eyre T."/>
            <person name="Redmond S."/>
            <person name="Banerjee R."/>
            <person name="Chi J."/>
            <person name="Fu B."/>
            <person name="Langley E."/>
            <person name="Maguire S.F."/>
            <person name="Laird G.K."/>
            <person name="Lloyd D."/>
            <person name="Kenyon E."/>
            <person name="Donaldson S."/>
            <person name="Sehra H."/>
            <person name="Almeida-King J."/>
            <person name="Loveland J."/>
            <person name="Trevanion S."/>
            <person name="Jones M."/>
            <person name="Quail M."/>
            <person name="Willey D."/>
            <person name="Hunt A."/>
            <person name="Burton J."/>
            <person name="Sims S."/>
            <person name="McLay K."/>
            <person name="Plumb B."/>
            <person name="Davis J."/>
            <person name="Clee C."/>
            <person name="Oliver K."/>
            <person name="Clark R."/>
            <person name="Riddle C."/>
            <person name="Elliot D."/>
            <person name="Threadgold G."/>
            <person name="Harden G."/>
            <person name="Ware D."/>
            <person name="Begum S."/>
            <person name="Mortimore B."/>
            <person name="Kerry G."/>
            <person name="Heath P."/>
            <person name="Phillimore B."/>
            <person name="Tracey A."/>
            <person name="Corby N."/>
            <person name="Dunn M."/>
            <person name="Johnson C."/>
            <person name="Wood J."/>
            <person name="Clark S."/>
            <person name="Pelan S."/>
            <person name="Griffiths G."/>
            <person name="Smith M."/>
            <person name="Glithero R."/>
            <person name="Howden P."/>
            <person name="Barker N."/>
            <person name="Lloyd C."/>
            <person name="Stevens C."/>
            <person name="Harley J."/>
            <person name="Holt K."/>
            <person name="Panagiotidis G."/>
            <person name="Lovell J."/>
            <person name="Beasley H."/>
            <person name="Henderson C."/>
            <person name="Gordon D."/>
            <person name="Auger K."/>
            <person name="Wright D."/>
            <person name="Collins J."/>
            <person name="Raisen C."/>
            <person name="Dyer L."/>
            <person name="Leung K."/>
            <person name="Robertson L."/>
            <person name="Ambridge K."/>
            <person name="Leongamornlert D."/>
            <person name="McGuire S."/>
            <person name="Gilderthorp R."/>
            <person name="Griffiths C."/>
            <person name="Manthravadi D."/>
            <person name="Nichol S."/>
            <person name="Barker G."/>
            <person name="Whitehead S."/>
            <person name="Kay M."/>
            <person name="Brown J."/>
            <person name="Murnane C."/>
            <person name="Gray E."/>
            <person name="Humphries M."/>
            <person name="Sycamore N."/>
            <person name="Barker D."/>
            <person name="Saunders D."/>
            <person name="Wallis J."/>
            <person name="Babbage A."/>
            <person name="Hammond S."/>
            <person name="Mashreghi-Mohammadi M."/>
            <person name="Barr L."/>
            <person name="Martin S."/>
            <person name="Wray P."/>
            <person name="Ellington A."/>
            <person name="Matthews N."/>
            <person name="Ellwood M."/>
            <person name="Woodmansey R."/>
            <person name="Clark G."/>
            <person name="Cooper J."/>
            <person name="Tromans A."/>
            <person name="Grafham D."/>
            <person name="Skuce C."/>
            <person name="Pandian R."/>
            <person name="Andrews R."/>
            <person name="Harrison E."/>
            <person name="Kimberley A."/>
            <person name="Garnett J."/>
            <person name="Fosker N."/>
            <person name="Hall R."/>
            <person name="Garner P."/>
            <person name="Kelly D."/>
            <person name="Bird C."/>
            <person name="Palmer S."/>
            <person name="Gehring I."/>
            <person name="Berger A."/>
            <person name="Dooley C.M."/>
            <person name="Ersan-Urun Z."/>
            <person name="Eser C."/>
            <person name="Geiger H."/>
            <person name="Geisler M."/>
            <person name="Karotki L."/>
            <person name="Kirn A."/>
            <person name="Konantz J."/>
            <person name="Konantz M."/>
            <person name="Oberlander M."/>
            <person name="Rudolph-Geiger S."/>
            <person name="Teucke M."/>
            <person name="Lanz C."/>
            <person name="Raddatz G."/>
            <person name="Osoegawa K."/>
            <person name="Zhu B."/>
            <person name="Rapp A."/>
            <person name="Widaa S."/>
            <person name="Langford C."/>
            <person name="Yang F."/>
            <person name="Schuster S.C."/>
            <person name="Carter N.P."/>
            <person name="Harrow J."/>
            <person name="Ning Z."/>
            <person name="Herrero J."/>
            <person name="Searle S.M."/>
            <person name="Enright A."/>
            <person name="Geisler R."/>
            <person name="Plasterk R.H."/>
            <person name="Lee C."/>
            <person name="Westerfield M."/>
            <person name="de Jong P.J."/>
            <person name="Zon L.I."/>
            <person name="Postlethwait J.H."/>
            <person name="Nusslein-Volhard C."/>
            <person name="Hubbard T.J."/>
            <person name="Roest Crollius H."/>
            <person name="Rogers J."/>
            <person name="Stemple D.L."/>
        </authorList>
    </citation>
    <scope>NUCLEOTIDE SEQUENCE [LARGE SCALE GENOMIC DNA]</scope>
    <source>
        <strain>Tuebingen</strain>
    </source>
</reference>
<reference key="2">
    <citation type="submission" date="2003-01" db="EMBL/GenBank/DDBJ databases">
        <authorList>
            <consortium name="NIH - Zebrafish Gene Collection (ZGC) project"/>
        </authorList>
    </citation>
    <scope>NUCLEOTIDE SEQUENCE [LARGE SCALE MRNA]</scope>
    <source>
        <strain>AB</strain>
    </source>
</reference>
<evidence type="ECO:0000250" key="1"/>
<evidence type="ECO:0000255" key="2"/>
<evidence type="ECO:0000305" key="3"/>
<organism>
    <name type="scientific">Danio rerio</name>
    <name type="common">Zebrafish</name>
    <name type="synonym">Brachydanio rerio</name>
    <dbReference type="NCBI Taxonomy" id="7955"/>
    <lineage>
        <taxon>Eukaryota</taxon>
        <taxon>Metazoa</taxon>
        <taxon>Chordata</taxon>
        <taxon>Craniata</taxon>
        <taxon>Vertebrata</taxon>
        <taxon>Euteleostomi</taxon>
        <taxon>Actinopterygii</taxon>
        <taxon>Neopterygii</taxon>
        <taxon>Teleostei</taxon>
        <taxon>Ostariophysi</taxon>
        <taxon>Cypriniformes</taxon>
        <taxon>Danionidae</taxon>
        <taxon>Danioninae</taxon>
        <taxon>Danio</taxon>
    </lineage>
</organism>
<sequence>MLNLIKLPQVFTINQVPKVFHEDGIISGYRHPCSSAKDCVLSLFQLTNETLNIWTHFLPTWFFLWKLLTVVLVLEDWRDPFIWPFLVFLLSCCVYPLASSCAHTFSTMSERARHICFFFDYGALSFYSLGSAIIYSSYSFPDKWVNGTFHLNYVSIAVVNSIISTALACYSRLGLPFLEYNCHSIKRPSGKLDQKLCKCLRIIAFVYPYLFDNIPLFYRIFVCAGEGCTVNEANTVHYQHTSLAFFTGFLFATHLPERLAPGSFDYIGHSHQLFHVFAIIGTYFQMTAIELDMAARKQWLHAHLPPVTFLNTVGAAFFSVVSGLCIVYVFSLSLFSTRGVKNKSF</sequence>
<keyword id="KW-0217">Developmental protein</keyword>
<keyword id="KW-0221">Differentiation</keyword>
<keyword id="KW-0446">Lipid-binding</keyword>
<keyword id="KW-0472">Membrane</keyword>
<keyword id="KW-0896">Oogenesis</keyword>
<keyword id="KW-0675">Receptor</keyword>
<keyword id="KW-1185">Reference proteome</keyword>
<keyword id="KW-0754">Steroid-binding</keyword>
<keyword id="KW-0812">Transmembrane</keyword>
<keyword id="KW-1133">Transmembrane helix</keyword>
<gene>
    <name type="primary">paqr5a</name>
    <name type="synonym">mprg</name>
    <name type="synonym">paqr5</name>
    <name type="ORF">zgc:56016</name>
</gene>
<comment type="function">
    <text evidence="1">Steroid membrane receptor. Binds progesterone. May be involved in oocyte maturation (By similarity).</text>
</comment>
<comment type="subcellular location">
    <subcellularLocation>
        <location evidence="1">Membrane</location>
        <topology evidence="1">Multi-pass membrane protein</topology>
    </subcellularLocation>
</comment>
<comment type="similarity">
    <text evidence="3">Belongs to the ADIPOR family.</text>
</comment>
<name>MPRGA_DANRE</name>
<feature type="chain" id="PRO_0000218845" description="Membrane progestin receptor gamma-A">
    <location>
        <begin position="1"/>
        <end position="345"/>
    </location>
</feature>
<feature type="topological domain" description="Cytoplasmic" evidence="2">
    <location>
        <begin position="1"/>
        <end position="52"/>
    </location>
</feature>
<feature type="transmembrane region" description="Helical; Name=1" evidence="2">
    <location>
        <begin position="53"/>
        <end position="73"/>
    </location>
</feature>
<feature type="topological domain" description="Extracellular" evidence="2">
    <location>
        <begin position="74"/>
        <end position="80"/>
    </location>
</feature>
<feature type="transmembrane region" description="Helical; Name=2" evidence="2">
    <location>
        <begin position="81"/>
        <end position="101"/>
    </location>
</feature>
<feature type="topological domain" description="Cytoplasmic" evidence="2">
    <location>
        <begin position="102"/>
        <end position="114"/>
    </location>
</feature>
<feature type="transmembrane region" description="Helical; Name=3" evidence="2">
    <location>
        <begin position="115"/>
        <end position="135"/>
    </location>
</feature>
<feature type="topological domain" description="Extracellular" evidence="2">
    <location>
        <begin position="136"/>
        <end position="148"/>
    </location>
</feature>
<feature type="transmembrane region" description="Helical; Name=4" evidence="2">
    <location>
        <begin position="149"/>
        <end position="169"/>
    </location>
</feature>
<feature type="topological domain" description="Cytoplasmic" evidence="2">
    <location>
        <begin position="170"/>
        <end position="201"/>
    </location>
</feature>
<feature type="transmembrane region" description="Helical; Name=5" evidence="2">
    <location>
        <begin position="202"/>
        <end position="222"/>
    </location>
</feature>
<feature type="topological domain" description="Extracellular" evidence="2">
    <location>
        <begin position="223"/>
        <end position="272"/>
    </location>
</feature>
<feature type="transmembrane region" description="Helical; Name=6" evidence="2">
    <location>
        <begin position="273"/>
        <end position="293"/>
    </location>
</feature>
<feature type="topological domain" description="Cytoplasmic" evidence="2">
    <location>
        <begin position="294"/>
        <end position="314"/>
    </location>
</feature>
<feature type="transmembrane region" description="Helical; Name=7" evidence="2">
    <location>
        <begin position="315"/>
        <end position="335"/>
    </location>
</feature>
<feature type="topological domain" description="Extracellular" evidence="2">
    <location>
        <begin position="336"/>
        <end position="345"/>
    </location>
</feature>
<feature type="sequence conflict" description="In Ref. 2; AAH45864." evidence="3" ref="2">
    <original>F</original>
    <variation>L</variation>
    <location>
        <position position="345"/>
    </location>
</feature>